<accession>Q2NIF5</accession>
<protein>
    <recommendedName>
        <fullName evidence="1">Asparagine--tRNA ligase</fullName>
        <ecNumber evidence="1">6.1.1.22</ecNumber>
    </recommendedName>
    <alternativeName>
        <fullName evidence="1">Asparaginyl-tRNA synthetase</fullName>
        <shortName evidence="1">AsnRS</shortName>
    </alternativeName>
</protein>
<comment type="catalytic activity">
    <reaction evidence="1">
        <text>tRNA(Asn) + L-asparagine + ATP = L-asparaginyl-tRNA(Asn) + AMP + diphosphate + H(+)</text>
        <dbReference type="Rhea" id="RHEA:11180"/>
        <dbReference type="Rhea" id="RHEA-COMP:9659"/>
        <dbReference type="Rhea" id="RHEA-COMP:9674"/>
        <dbReference type="ChEBI" id="CHEBI:15378"/>
        <dbReference type="ChEBI" id="CHEBI:30616"/>
        <dbReference type="ChEBI" id="CHEBI:33019"/>
        <dbReference type="ChEBI" id="CHEBI:58048"/>
        <dbReference type="ChEBI" id="CHEBI:78442"/>
        <dbReference type="ChEBI" id="CHEBI:78515"/>
        <dbReference type="ChEBI" id="CHEBI:456215"/>
        <dbReference type="EC" id="6.1.1.22"/>
    </reaction>
</comment>
<comment type="subunit">
    <text evidence="1">Homodimer.</text>
</comment>
<comment type="subcellular location">
    <subcellularLocation>
        <location evidence="1">Cytoplasm</location>
    </subcellularLocation>
</comment>
<comment type="similarity">
    <text evidence="1">Belongs to the class-II aminoacyl-tRNA synthetase family.</text>
</comment>
<gene>
    <name evidence="1" type="primary">asnS</name>
    <name type="ordered locus">AYWB_671</name>
</gene>
<proteinExistence type="inferred from homology"/>
<reference key="1">
    <citation type="journal article" date="2006" name="J. Bacteriol.">
        <title>Living with genome instability: the adaptation of phytoplasmas to diverse environments of their insect and plant hosts.</title>
        <authorList>
            <person name="Bai X."/>
            <person name="Zhang J."/>
            <person name="Ewing A."/>
            <person name="Miller S.A."/>
            <person name="Jancso Radek A."/>
            <person name="Shevchenko D.V."/>
            <person name="Tsukerman K."/>
            <person name="Walunas T."/>
            <person name="Lapidus A."/>
            <person name="Campbell J.W."/>
            <person name="Hogenhout S.A."/>
        </authorList>
    </citation>
    <scope>NUCLEOTIDE SEQUENCE [LARGE SCALE GENOMIC DNA]</scope>
    <source>
        <strain>AYWB</strain>
    </source>
</reference>
<sequence length="503" mass="58286">MKISIKDIFQKPELFYQKKILLNGWVRNCRYQKKLIFIDLNDGTFLENLQIVCKEIKNIETADINEFQENQKFNNNNKSSNNINLEKLKEILQIGASLQVEGILKATNNLKTPFEISAQNISLLGTSDFSYPLQPKKHSKVFLRQISHLRVRTKLFGAVFRIRNTAFFALHSFFQKKGFFHINTPIITPNDGEGVGELFQITTLNLEVLPQTKNIPNAFKPVNENTSKKGIDYKKDFFGKKVFLTVTGQLEAEAMALGLNKVYTFGPTFRSEKSNTTRHAAEFWMLEPEMAFCDLSQNLKVAQEMLQFVISKCLEQNYQDIEFLDKTEKNGLIEELQNIAEEKEFLTVKYEQALEILQKSNTKFENPLFYGVDLATEHEKYLTEKHFKKPVFIVDWPKEIKAFYMKNNPDQKTVAAMDLLFPRVGELIGGSQREENLSVLIEKMNQMKISQKDLEWYLDLRRFGGCIHSGFGLGFERLLIFLTGLDNIRDVIAFPRTYHNLVF</sequence>
<feature type="chain" id="PRO_1000051375" description="Asparagine--tRNA ligase">
    <location>
        <begin position="1"/>
        <end position="503"/>
    </location>
</feature>
<organism>
    <name type="scientific">Aster yellows witches'-broom phytoplasma (strain AYWB)</name>
    <dbReference type="NCBI Taxonomy" id="322098"/>
    <lineage>
        <taxon>Bacteria</taxon>
        <taxon>Bacillati</taxon>
        <taxon>Mycoplasmatota</taxon>
        <taxon>Mollicutes</taxon>
        <taxon>Acholeplasmatales</taxon>
        <taxon>Acholeplasmataceae</taxon>
        <taxon>Candidatus Phytoplasma</taxon>
        <taxon>16SrI (Aster yellows group)</taxon>
    </lineage>
</organism>
<keyword id="KW-0030">Aminoacyl-tRNA synthetase</keyword>
<keyword id="KW-0067">ATP-binding</keyword>
<keyword id="KW-0963">Cytoplasm</keyword>
<keyword id="KW-0436">Ligase</keyword>
<keyword id="KW-0547">Nucleotide-binding</keyword>
<keyword id="KW-0648">Protein biosynthesis</keyword>
<evidence type="ECO:0000255" key="1">
    <source>
        <dbReference type="HAMAP-Rule" id="MF_00534"/>
    </source>
</evidence>
<dbReference type="EC" id="6.1.1.22" evidence="1"/>
<dbReference type="EMBL" id="CP000061">
    <property type="protein sequence ID" value="ABC65788.1"/>
    <property type="molecule type" value="Genomic_DNA"/>
</dbReference>
<dbReference type="RefSeq" id="WP_011412949.1">
    <property type="nucleotide sequence ID" value="NC_007716.1"/>
</dbReference>
<dbReference type="SMR" id="Q2NIF5"/>
<dbReference type="STRING" id="322098.AYWB_671"/>
<dbReference type="KEGG" id="ayw:AYWB_671"/>
<dbReference type="eggNOG" id="COG0017">
    <property type="taxonomic scope" value="Bacteria"/>
</dbReference>
<dbReference type="HOGENOM" id="CLU_004553_2_0_14"/>
<dbReference type="OrthoDB" id="9801152at2"/>
<dbReference type="PhylomeDB" id="Q2NIF5"/>
<dbReference type="Proteomes" id="UP000001934">
    <property type="component" value="Chromosome"/>
</dbReference>
<dbReference type="GO" id="GO:0005737">
    <property type="term" value="C:cytoplasm"/>
    <property type="evidence" value="ECO:0007669"/>
    <property type="project" value="UniProtKB-SubCell"/>
</dbReference>
<dbReference type="GO" id="GO:0004816">
    <property type="term" value="F:asparagine-tRNA ligase activity"/>
    <property type="evidence" value="ECO:0007669"/>
    <property type="project" value="UniProtKB-UniRule"/>
</dbReference>
<dbReference type="GO" id="GO:0005524">
    <property type="term" value="F:ATP binding"/>
    <property type="evidence" value="ECO:0007669"/>
    <property type="project" value="UniProtKB-UniRule"/>
</dbReference>
<dbReference type="GO" id="GO:0003676">
    <property type="term" value="F:nucleic acid binding"/>
    <property type="evidence" value="ECO:0007669"/>
    <property type="project" value="InterPro"/>
</dbReference>
<dbReference type="GO" id="GO:0006421">
    <property type="term" value="P:asparaginyl-tRNA aminoacylation"/>
    <property type="evidence" value="ECO:0007669"/>
    <property type="project" value="UniProtKB-UniRule"/>
</dbReference>
<dbReference type="CDD" id="cd00776">
    <property type="entry name" value="AsxRS_core"/>
    <property type="match status" value="1"/>
</dbReference>
<dbReference type="CDD" id="cd04318">
    <property type="entry name" value="EcAsnRS_like_N"/>
    <property type="match status" value="1"/>
</dbReference>
<dbReference type="FunFam" id="3.30.930.10:FF:000016">
    <property type="entry name" value="Asparagine--tRNA ligase"/>
    <property type="match status" value="1"/>
</dbReference>
<dbReference type="Gene3D" id="3.30.930.10">
    <property type="entry name" value="Bira Bifunctional Protein, Domain 2"/>
    <property type="match status" value="1"/>
</dbReference>
<dbReference type="Gene3D" id="2.40.50.140">
    <property type="entry name" value="Nucleic acid-binding proteins"/>
    <property type="match status" value="1"/>
</dbReference>
<dbReference type="HAMAP" id="MF_00534">
    <property type="entry name" value="Asn_tRNA_synth"/>
    <property type="match status" value="1"/>
</dbReference>
<dbReference type="InterPro" id="IPR004364">
    <property type="entry name" value="Aa-tRNA-synt_II"/>
</dbReference>
<dbReference type="InterPro" id="IPR006195">
    <property type="entry name" value="aa-tRNA-synth_II"/>
</dbReference>
<dbReference type="InterPro" id="IPR045864">
    <property type="entry name" value="aa-tRNA-synth_II/BPL/LPL"/>
</dbReference>
<dbReference type="InterPro" id="IPR004522">
    <property type="entry name" value="Asn-tRNA-ligase"/>
</dbReference>
<dbReference type="InterPro" id="IPR002312">
    <property type="entry name" value="Asp/Asn-tRNA-synth_IIb"/>
</dbReference>
<dbReference type="InterPro" id="IPR012340">
    <property type="entry name" value="NA-bd_OB-fold"/>
</dbReference>
<dbReference type="InterPro" id="IPR004365">
    <property type="entry name" value="NA-bd_OB_tRNA"/>
</dbReference>
<dbReference type="NCBIfam" id="TIGR00457">
    <property type="entry name" value="asnS"/>
    <property type="match status" value="1"/>
</dbReference>
<dbReference type="NCBIfam" id="NF003037">
    <property type="entry name" value="PRK03932.1"/>
    <property type="match status" value="1"/>
</dbReference>
<dbReference type="PANTHER" id="PTHR22594:SF34">
    <property type="entry name" value="ASPARAGINE--TRNA LIGASE, MITOCHONDRIAL-RELATED"/>
    <property type="match status" value="1"/>
</dbReference>
<dbReference type="PANTHER" id="PTHR22594">
    <property type="entry name" value="ASPARTYL/LYSYL-TRNA SYNTHETASE"/>
    <property type="match status" value="1"/>
</dbReference>
<dbReference type="Pfam" id="PF00152">
    <property type="entry name" value="tRNA-synt_2"/>
    <property type="match status" value="1"/>
</dbReference>
<dbReference type="Pfam" id="PF01336">
    <property type="entry name" value="tRNA_anti-codon"/>
    <property type="match status" value="1"/>
</dbReference>
<dbReference type="PRINTS" id="PR01042">
    <property type="entry name" value="TRNASYNTHASP"/>
</dbReference>
<dbReference type="SUPFAM" id="SSF55681">
    <property type="entry name" value="Class II aaRS and biotin synthetases"/>
    <property type="match status" value="1"/>
</dbReference>
<dbReference type="SUPFAM" id="SSF50249">
    <property type="entry name" value="Nucleic acid-binding proteins"/>
    <property type="match status" value="1"/>
</dbReference>
<dbReference type="PROSITE" id="PS50862">
    <property type="entry name" value="AA_TRNA_LIGASE_II"/>
    <property type="match status" value="1"/>
</dbReference>
<name>SYN_AYWBP</name>